<accession>Q9ZMV1</accession>
<comment type="function">
    <text evidence="1">Binds directly to 23S ribosomal RNA and is necessary for the in vitro assembly process of the 50S ribosomal subunit. It is not involved in the protein synthesizing functions of that subunit (By similarity).</text>
</comment>
<comment type="similarity">
    <text evidence="2">Belongs to the bacterial ribosomal protein bL20 family.</text>
</comment>
<gene>
    <name type="primary">rplT</name>
    <name type="ordered locus">jhp_0116</name>
</gene>
<dbReference type="EMBL" id="AE001439">
    <property type="protein sequence ID" value="AAD05705.1"/>
    <property type="molecule type" value="Genomic_DNA"/>
</dbReference>
<dbReference type="PIR" id="F71970">
    <property type="entry name" value="F71970"/>
</dbReference>
<dbReference type="RefSeq" id="WP_001264175.1">
    <property type="nucleotide sequence ID" value="NZ_CP011330.1"/>
</dbReference>
<dbReference type="SMR" id="Q9ZMV1"/>
<dbReference type="KEGG" id="hpj:jhp_0116"/>
<dbReference type="PATRIC" id="fig|85963.30.peg.912"/>
<dbReference type="eggNOG" id="COG0292">
    <property type="taxonomic scope" value="Bacteria"/>
</dbReference>
<dbReference type="Proteomes" id="UP000000804">
    <property type="component" value="Chromosome"/>
</dbReference>
<dbReference type="GO" id="GO:1990904">
    <property type="term" value="C:ribonucleoprotein complex"/>
    <property type="evidence" value="ECO:0007669"/>
    <property type="project" value="UniProtKB-KW"/>
</dbReference>
<dbReference type="GO" id="GO:0005840">
    <property type="term" value="C:ribosome"/>
    <property type="evidence" value="ECO:0007669"/>
    <property type="project" value="UniProtKB-KW"/>
</dbReference>
<dbReference type="GO" id="GO:0019843">
    <property type="term" value="F:rRNA binding"/>
    <property type="evidence" value="ECO:0007669"/>
    <property type="project" value="UniProtKB-UniRule"/>
</dbReference>
<dbReference type="GO" id="GO:0003735">
    <property type="term" value="F:structural constituent of ribosome"/>
    <property type="evidence" value="ECO:0007669"/>
    <property type="project" value="InterPro"/>
</dbReference>
<dbReference type="GO" id="GO:0000027">
    <property type="term" value="P:ribosomal large subunit assembly"/>
    <property type="evidence" value="ECO:0007669"/>
    <property type="project" value="UniProtKB-UniRule"/>
</dbReference>
<dbReference type="GO" id="GO:0006412">
    <property type="term" value="P:translation"/>
    <property type="evidence" value="ECO:0007669"/>
    <property type="project" value="InterPro"/>
</dbReference>
<dbReference type="CDD" id="cd07026">
    <property type="entry name" value="Ribosomal_L20"/>
    <property type="match status" value="1"/>
</dbReference>
<dbReference type="FunFam" id="1.10.1900.20:FF:000001">
    <property type="entry name" value="50S ribosomal protein L20"/>
    <property type="match status" value="1"/>
</dbReference>
<dbReference type="Gene3D" id="6.10.160.10">
    <property type="match status" value="1"/>
</dbReference>
<dbReference type="Gene3D" id="1.10.1900.20">
    <property type="entry name" value="Ribosomal protein L20"/>
    <property type="match status" value="1"/>
</dbReference>
<dbReference type="HAMAP" id="MF_00382">
    <property type="entry name" value="Ribosomal_bL20"/>
    <property type="match status" value="1"/>
</dbReference>
<dbReference type="InterPro" id="IPR005813">
    <property type="entry name" value="Ribosomal_bL20"/>
</dbReference>
<dbReference type="InterPro" id="IPR049946">
    <property type="entry name" value="RIBOSOMAL_L20_CS"/>
</dbReference>
<dbReference type="InterPro" id="IPR035566">
    <property type="entry name" value="Ribosomal_protein_bL20_C"/>
</dbReference>
<dbReference type="NCBIfam" id="TIGR01032">
    <property type="entry name" value="rplT_bact"/>
    <property type="match status" value="1"/>
</dbReference>
<dbReference type="PANTHER" id="PTHR10986">
    <property type="entry name" value="39S RIBOSOMAL PROTEIN L20"/>
    <property type="match status" value="1"/>
</dbReference>
<dbReference type="Pfam" id="PF00453">
    <property type="entry name" value="Ribosomal_L20"/>
    <property type="match status" value="1"/>
</dbReference>
<dbReference type="PRINTS" id="PR00062">
    <property type="entry name" value="RIBOSOMALL20"/>
</dbReference>
<dbReference type="SUPFAM" id="SSF74731">
    <property type="entry name" value="Ribosomal protein L20"/>
    <property type="match status" value="1"/>
</dbReference>
<dbReference type="PROSITE" id="PS00937">
    <property type="entry name" value="RIBOSOMAL_L20"/>
    <property type="match status" value="1"/>
</dbReference>
<sequence>MRVKTGVVRRRRHKKVLKLARGFYSGRRKHFRKAKEQLERSMYYAFRDRKQKKREFRSLWVVRINAACRMHNTSYSRFMHALKVANIELDRKVLADMAMNDMQAFKSVLESVKEHL</sequence>
<proteinExistence type="inferred from homology"/>
<name>RL20_HELPJ</name>
<evidence type="ECO:0000250" key="1"/>
<evidence type="ECO:0000305" key="2"/>
<protein>
    <recommendedName>
        <fullName evidence="2">Large ribosomal subunit protein bL20</fullName>
    </recommendedName>
    <alternativeName>
        <fullName>50S ribosomal protein L20</fullName>
    </alternativeName>
</protein>
<reference key="1">
    <citation type="journal article" date="1999" name="Nature">
        <title>Genomic sequence comparison of two unrelated isolates of the human gastric pathogen Helicobacter pylori.</title>
        <authorList>
            <person name="Alm R.A."/>
            <person name="Ling L.-S.L."/>
            <person name="Moir D.T."/>
            <person name="King B.L."/>
            <person name="Brown E.D."/>
            <person name="Doig P.C."/>
            <person name="Smith D.R."/>
            <person name="Noonan B."/>
            <person name="Guild B.C."/>
            <person name="deJonge B.L."/>
            <person name="Carmel G."/>
            <person name="Tummino P.J."/>
            <person name="Caruso A."/>
            <person name="Uria-Nickelsen M."/>
            <person name="Mills D.M."/>
            <person name="Ives C."/>
            <person name="Gibson R."/>
            <person name="Merberg D."/>
            <person name="Mills S.D."/>
            <person name="Jiang Q."/>
            <person name="Taylor D.E."/>
            <person name="Vovis G.F."/>
            <person name="Trust T.J."/>
        </authorList>
    </citation>
    <scope>NUCLEOTIDE SEQUENCE [LARGE SCALE GENOMIC DNA]</scope>
    <source>
        <strain>J99 / ATCC 700824</strain>
    </source>
</reference>
<feature type="chain" id="PRO_0000177168" description="Large ribosomal subunit protein bL20">
    <location>
        <begin position="1"/>
        <end position="116"/>
    </location>
</feature>
<organism>
    <name type="scientific">Helicobacter pylori (strain J99 / ATCC 700824)</name>
    <name type="common">Campylobacter pylori J99</name>
    <dbReference type="NCBI Taxonomy" id="85963"/>
    <lineage>
        <taxon>Bacteria</taxon>
        <taxon>Pseudomonadati</taxon>
        <taxon>Campylobacterota</taxon>
        <taxon>Epsilonproteobacteria</taxon>
        <taxon>Campylobacterales</taxon>
        <taxon>Helicobacteraceae</taxon>
        <taxon>Helicobacter</taxon>
    </lineage>
</organism>
<keyword id="KW-0687">Ribonucleoprotein</keyword>
<keyword id="KW-0689">Ribosomal protein</keyword>
<keyword id="KW-0694">RNA-binding</keyword>
<keyword id="KW-0699">rRNA-binding</keyword>